<keyword id="KW-0378">Hydrolase</keyword>
<keyword id="KW-0464">Manganese</keyword>
<protein>
    <recommendedName>
        <fullName evidence="1">Adenine deaminase</fullName>
        <shortName evidence="1">Adenase</shortName>
        <shortName evidence="1">Adenine aminase</shortName>
        <ecNumber evidence="1">3.5.4.2</ecNumber>
    </recommendedName>
</protein>
<comment type="catalytic activity">
    <reaction evidence="1">
        <text>adenine + H2O + H(+) = hypoxanthine + NH4(+)</text>
        <dbReference type="Rhea" id="RHEA:23688"/>
        <dbReference type="ChEBI" id="CHEBI:15377"/>
        <dbReference type="ChEBI" id="CHEBI:15378"/>
        <dbReference type="ChEBI" id="CHEBI:16708"/>
        <dbReference type="ChEBI" id="CHEBI:17368"/>
        <dbReference type="ChEBI" id="CHEBI:28938"/>
        <dbReference type="EC" id="3.5.4.2"/>
    </reaction>
</comment>
<comment type="cofactor">
    <cofactor evidence="1">
        <name>Mn(2+)</name>
        <dbReference type="ChEBI" id="CHEBI:29035"/>
    </cofactor>
</comment>
<comment type="similarity">
    <text evidence="1">Belongs to the metallo-dependent hydrolases superfamily. Adenine deaminase family.</text>
</comment>
<name>ADEC_METS4</name>
<dbReference type="EC" id="3.5.4.2" evidence="1"/>
<dbReference type="EMBL" id="CP000943">
    <property type="protein sequence ID" value="ACA16687.1"/>
    <property type="molecule type" value="Genomic_DNA"/>
</dbReference>
<dbReference type="RefSeq" id="WP_012332096.1">
    <property type="nucleotide sequence ID" value="NC_010511.1"/>
</dbReference>
<dbReference type="SMR" id="B0UDG6"/>
<dbReference type="STRING" id="426117.M446_2226"/>
<dbReference type="KEGG" id="met:M446_2226"/>
<dbReference type="eggNOG" id="COG1001">
    <property type="taxonomic scope" value="Bacteria"/>
</dbReference>
<dbReference type="HOGENOM" id="CLU_027935_0_0_5"/>
<dbReference type="GO" id="GO:0000034">
    <property type="term" value="F:adenine deaminase activity"/>
    <property type="evidence" value="ECO:0007669"/>
    <property type="project" value="UniProtKB-UniRule"/>
</dbReference>
<dbReference type="GO" id="GO:0006146">
    <property type="term" value="P:adenine catabolic process"/>
    <property type="evidence" value="ECO:0007669"/>
    <property type="project" value="InterPro"/>
</dbReference>
<dbReference type="CDD" id="cd01295">
    <property type="entry name" value="AdeC"/>
    <property type="match status" value="1"/>
</dbReference>
<dbReference type="Gene3D" id="3.20.20.140">
    <property type="entry name" value="Metal-dependent hydrolases"/>
    <property type="match status" value="1"/>
</dbReference>
<dbReference type="Gene3D" id="2.30.40.10">
    <property type="entry name" value="Urease, subunit C, domain 1"/>
    <property type="match status" value="1"/>
</dbReference>
<dbReference type="HAMAP" id="MF_01518">
    <property type="entry name" value="Adenine_deamin"/>
    <property type="match status" value="1"/>
</dbReference>
<dbReference type="InterPro" id="IPR006679">
    <property type="entry name" value="Adenine_deam"/>
</dbReference>
<dbReference type="InterPro" id="IPR026912">
    <property type="entry name" value="Adenine_deam_C"/>
</dbReference>
<dbReference type="InterPro" id="IPR006680">
    <property type="entry name" value="Amidohydro-rel"/>
</dbReference>
<dbReference type="InterPro" id="IPR011059">
    <property type="entry name" value="Metal-dep_hydrolase_composite"/>
</dbReference>
<dbReference type="InterPro" id="IPR032466">
    <property type="entry name" value="Metal_Hydrolase"/>
</dbReference>
<dbReference type="NCBIfam" id="TIGR01178">
    <property type="entry name" value="ade"/>
    <property type="match status" value="1"/>
</dbReference>
<dbReference type="PANTHER" id="PTHR11113:SF2">
    <property type="entry name" value="ADENINE DEAMINASE"/>
    <property type="match status" value="1"/>
</dbReference>
<dbReference type="PANTHER" id="PTHR11113">
    <property type="entry name" value="N-ACETYLGLUCOSAMINE-6-PHOSPHATE DEACETYLASE"/>
    <property type="match status" value="1"/>
</dbReference>
<dbReference type="Pfam" id="PF13382">
    <property type="entry name" value="Adenine_deam_C"/>
    <property type="match status" value="1"/>
</dbReference>
<dbReference type="Pfam" id="PF01979">
    <property type="entry name" value="Amidohydro_1"/>
    <property type="match status" value="1"/>
</dbReference>
<dbReference type="SUPFAM" id="SSF51338">
    <property type="entry name" value="Composite domain of metallo-dependent hydrolases"/>
    <property type="match status" value="1"/>
</dbReference>
<dbReference type="SUPFAM" id="SSF51556">
    <property type="entry name" value="Metallo-dependent hydrolases"/>
    <property type="match status" value="1"/>
</dbReference>
<feature type="chain" id="PRO_1000146244" description="Adenine deaminase">
    <location>
        <begin position="1"/>
        <end position="564"/>
    </location>
</feature>
<proteinExistence type="inferred from homology"/>
<evidence type="ECO:0000255" key="1">
    <source>
        <dbReference type="HAMAP-Rule" id="MF_01518"/>
    </source>
</evidence>
<reference key="1">
    <citation type="submission" date="2008-02" db="EMBL/GenBank/DDBJ databases">
        <title>Complete sequence of chromosome of Methylobacterium sp. 4-46.</title>
        <authorList>
            <consortium name="US DOE Joint Genome Institute"/>
            <person name="Copeland A."/>
            <person name="Lucas S."/>
            <person name="Lapidus A."/>
            <person name="Glavina del Rio T."/>
            <person name="Dalin E."/>
            <person name="Tice H."/>
            <person name="Bruce D."/>
            <person name="Goodwin L."/>
            <person name="Pitluck S."/>
            <person name="Chertkov O."/>
            <person name="Brettin T."/>
            <person name="Detter J.C."/>
            <person name="Han C."/>
            <person name="Kuske C.R."/>
            <person name="Schmutz J."/>
            <person name="Larimer F."/>
            <person name="Land M."/>
            <person name="Hauser L."/>
            <person name="Kyrpides N."/>
            <person name="Ivanova N."/>
            <person name="Marx C.J."/>
            <person name="Richardson P."/>
        </authorList>
    </citation>
    <scope>NUCLEOTIDE SEQUENCE [LARGE SCALE GENOMIC DNA]</scope>
    <source>
        <strain>4-46</strain>
    </source>
</reference>
<sequence length="564" mass="59003">MSDEIARRIAQGAGRAPADLVIRDARLLDLVTGDLVDTDIAVCGDGIVGTYGEYAGTRVIEAEGRVAVPGFIDTHLHVESSLITPHEFDRCVLPHGVTTAIWDPHELANVLGTAAFDYALQAARETVMDIRVQLSSCVPATDLESSGARIEAEALRPYRDHPGSLGLAEFMNFPGIVAGDPACLAKLALFAGRHVDGHAPLLSGRDLNAYVAAGIRTDHETTGPAEALEKIRKGMTVLIREGSVSKDLRALAPLLTVATSPFLAFCTDDRNPLDIAEEGHLDALIRMAIGLGVAPLAAYRAASLSAATAFGLADRGMIAPGRRADIVLLDDVETCAVARVIAGGRPAEEALAAPRTRTPAPGRGSVKAAPVAPEAFRVAAAPGETSVIGVVPGRIITEHRRLTLPARDGAALCDLAQDAVKVAVIARHGAPGMACGFVQGFGLRRGAIASSVGHDSHNLCVVGADEADMALAVNRLIALQGGFVVAEGGAVRAELALPIAGLMSDLPFEAVRDALHPLREAARGLGCTLPEPFLQVAFLPLPMIPHLKITDRGLVDVDRMRILP</sequence>
<accession>B0UDG6</accession>
<organism>
    <name type="scientific">Methylobacterium sp. (strain 4-46)</name>
    <dbReference type="NCBI Taxonomy" id="426117"/>
    <lineage>
        <taxon>Bacteria</taxon>
        <taxon>Pseudomonadati</taxon>
        <taxon>Pseudomonadota</taxon>
        <taxon>Alphaproteobacteria</taxon>
        <taxon>Hyphomicrobiales</taxon>
        <taxon>Methylobacteriaceae</taxon>
        <taxon>Methylobacterium</taxon>
    </lineage>
</organism>
<gene>
    <name evidence="1" type="primary">ade</name>
    <name type="ordered locus">M446_2226</name>
</gene>